<proteinExistence type="inferred from homology"/>
<gene>
    <name type="primary">cobW</name>
    <name type="ordered locus">PA2945</name>
</gene>
<keyword id="KW-0067">ATP-binding</keyword>
<keyword id="KW-0143">Chaperone</keyword>
<keyword id="KW-0169">Cobalamin biosynthesis</keyword>
<keyword id="KW-0378">Hydrolase</keyword>
<keyword id="KW-0547">Nucleotide-binding</keyword>
<keyword id="KW-0627">Porphyrin biosynthesis</keyword>
<keyword id="KW-1185">Reference proteome</keyword>
<name>COBW_PSEAE</name>
<accession>Q9HZQ2</accession>
<protein>
    <recommendedName>
        <fullName>Zinc chaperone CobW</fullName>
        <ecNumber evidence="1">3.6.5.-</ecNumber>
    </recommendedName>
</protein>
<organism>
    <name type="scientific">Pseudomonas aeruginosa (strain ATCC 15692 / DSM 22644 / CIP 104116 / JCM 14847 / LMG 12228 / 1C / PRS 101 / PAO1)</name>
    <dbReference type="NCBI Taxonomy" id="208964"/>
    <lineage>
        <taxon>Bacteria</taxon>
        <taxon>Pseudomonadati</taxon>
        <taxon>Pseudomonadota</taxon>
        <taxon>Gammaproteobacteria</taxon>
        <taxon>Pseudomonadales</taxon>
        <taxon>Pseudomonadaceae</taxon>
        <taxon>Pseudomonas</taxon>
    </lineage>
</organism>
<reference key="1">
    <citation type="journal article" date="2000" name="Nature">
        <title>Complete genome sequence of Pseudomonas aeruginosa PAO1, an opportunistic pathogen.</title>
        <authorList>
            <person name="Stover C.K."/>
            <person name="Pham X.-Q.T."/>
            <person name="Erwin A.L."/>
            <person name="Mizoguchi S.D."/>
            <person name="Warrener P."/>
            <person name="Hickey M.J."/>
            <person name="Brinkman F.S.L."/>
            <person name="Hufnagle W.O."/>
            <person name="Kowalik D.J."/>
            <person name="Lagrou M."/>
            <person name="Garber R.L."/>
            <person name="Goltry L."/>
            <person name="Tolentino E."/>
            <person name="Westbrock-Wadman S."/>
            <person name="Yuan Y."/>
            <person name="Brody L.L."/>
            <person name="Coulter S.N."/>
            <person name="Folger K.R."/>
            <person name="Kas A."/>
            <person name="Larbig K."/>
            <person name="Lim R.M."/>
            <person name="Smith K.A."/>
            <person name="Spencer D.H."/>
            <person name="Wong G.K.-S."/>
            <person name="Wu Z."/>
            <person name="Paulsen I.T."/>
            <person name="Reizer J."/>
            <person name="Saier M.H. Jr."/>
            <person name="Hancock R.E.W."/>
            <person name="Lory S."/>
            <person name="Olson M.V."/>
        </authorList>
    </citation>
    <scope>NUCLEOTIDE SEQUENCE [LARGE SCALE GENOMIC DNA]</scope>
    <source>
        <strain>ATCC 15692 / DSM 22644 / CIP 104116 / JCM 14847 / LMG 12228 / 1C / PRS 101 / PAO1</strain>
    </source>
</reference>
<sequence>MANPLRGPCVRATRPHARRAEQGLPMKTLAKLPVTIVTGFLGAGKTTLLRHMLDNAEGRRIAVIVNEFGELGIDGEILKQCSIGCSEEEAQGRVFELANGCLCCTVQEEFFPVMRELVARRGDLDQILIETSGLALPKPLVQAFQWPEIRNACTVDAVITVVDSPAVAAGTFAAHPEQVDQQRRQDPNLDHESPLHELFEDQLASADLVILNKADQLDAEALARVRAEIAGELPAAVKIVEASRGELPLPVLLGLNAEAELHIDGRPTHHDHEGHEDHDHDEFDSFHVDLPEVEEAALLEALGELVERHDILRIKGFAAIPGKPMRLLVQGVGKRFDRHFDRKWLADEARSTRLVVIGQELDQAAIANQLRTALA</sequence>
<feature type="chain" id="PRO_0000287790" description="Zinc chaperone CobW">
    <location>
        <begin position="1"/>
        <end position="375"/>
    </location>
</feature>
<feature type="domain" description="CobW C-terminal">
    <location>
        <begin position="283"/>
        <end position="374"/>
    </location>
</feature>
<feature type="region of interest" description="Disordered" evidence="4">
    <location>
        <begin position="173"/>
        <end position="192"/>
    </location>
</feature>
<feature type="short sequence motif" description="CXCC motif" evidence="3">
    <location>
        <begin position="101"/>
        <end position="104"/>
    </location>
</feature>
<feature type="compositionally biased region" description="Basic and acidic residues" evidence="4">
    <location>
        <begin position="177"/>
        <end position="192"/>
    </location>
</feature>
<feature type="binding site" evidence="3">
    <location>
        <begin position="39"/>
        <end position="46"/>
    </location>
    <ligand>
        <name>GTP</name>
        <dbReference type="ChEBI" id="CHEBI:37565"/>
    </ligand>
</feature>
<feature type="binding site" evidence="3">
    <location>
        <begin position="104"/>
        <end position="108"/>
    </location>
    <ligand>
        <name>GTP</name>
        <dbReference type="ChEBI" id="CHEBI:37565"/>
    </ligand>
</feature>
<feature type="binding site" evidence="3">
    <location>
        <begin position="212"/>
        <end position="215"/>
    </location>
    <ligand>
        <name>GTP</name>
        <dbReference type="ChEBI" id="CHEBI:37565"/>
    </ligand>
</feature>
<evidence type="ECO:0000250" key="1">
    <source>
        <dbReference type="UniProtKB" id="P24203"/>
    </source>
</evidence>
<evidence type="ECO:0000250" key="2">
    <source>
        <dbReference type="UniProtKB" id="Q8VEH6"/>
    </source>
</evidence>
<evidence type="ECO:0000255" key="3"/>
<evidence type="ECO:0000256" key="4">
    <source>
        <dbReference type="SAM" id="MobiDB-lite"/>
    </source>
</evidence>
<evidence type="ECO:0000305" key="5"/>
<dbReference type="EC" id="3.6.5.-" evidence="1"/>
<dbReference type="EMBL" id="AE004091">
    <property type="protein sequence ID" value="AAG06333.1"/>
    <property type="molecule type" value="Genomic_DNA"/>
</dbReference>
<dbReference type="PIR" id="D83276">
    <property type="entry name" value="D83276"/>
</dbReference>
<dbReference type="RefSeq" id="NP_251635.1">
    <property type="nucleotide sequence ID" value="NC_002516.2"/>
</dbReference>
<dbReference type="RefSeq" id="WP_010895644.1">
    <property type="nucleotide sequence ID" value="NC_002516.2"/>
</dbReference>
<dbReference type="SMR" id="Q9HZQ2"/>
<dbReference type="STRING" id="208964.PA2945"/>
<dbReference type="PaxDb" id="208964-PA2945"/>
<dbReference type="GeneID" id="882832"/>
<dbReference type="KEGG" id="pae:PA2945"/>
<dbReference type="PATRIC" id="fig|208964.12.peg.3089"/>
<dbReference type="PseudoCAP" id="PA2945"/>
<dbReference type="HOGENOM" id="CLU_017452_1_0_6"/>
<dbReference type="InParanoid" id="Q9HZQ2"/>
<dbReference type="OrthoDB" id="9808822at2"/>
<dbReference type="PhylomeDB" id="Q9HZQ2"/>
<dbReference type="BioCyc" id="PAER208964:G1FZ6-2996-MONOMER"/>
<dbReference type="UniPathway" id="UPA00148"/>
<dbReference type="Proteomes" id="UP000002438">
    <property type="component" value="Chromosome"/>
</dbReference>
<dbReference type="GO" id="GO:0005737">
    <property type="term" value="C:cytoplasm"/>
    <property type="evidence" value="ECO:0000318"/>
    <property type="project" value="GO_Central"/>
</dbReference>
<dbReference type="GO" id="GO:0005524">
    <property type="term" value="F:ATP binding"/>
    <property type="evidence" value="ECO:0007669"/>
    <property type="project" value="UniProtKB-KW"/>
</dbReference>
<dbReference type="GO" id="GO:0016787">
    <property type="term" value="F:hydrolase activity"/>
    <property type="evidence" value="ECO:0007669"/>
    <property type="project" value="UniProtKB-KW"/>
</dbReference>
<dbReference type="GO" id="GO:0009236">
    <property type="term" value="P:cobalamin biosynthetic process"/>
    <property type="evidence" value="ECO:0007669"/>
    <property type="project" value="UniProtKB-UniPathway"/>
</dbReference>
<dbReference type="GO" id="GO:0006779">
    <property type="term" value="P:porphyrin-containing compound biosynthetic process"/>
    <property type="evidence" value="ECO:0007669"/>
    <property type="project" value="UniProtKB-KW"/>
</dbReference>
<dbReference type="CDD" id="cd03112">
    <property type="entry name" value="CobW-like"/>
    <property type="match status" value="1"/>
</dbReference>
<dbReference type="Gene3D" id="3.30.1220.10">
    <property type="entry name" value="CobW-like, C-terminal domain"/>
    <property type="match status" value="1"/>
</dbReference>
<dbReference type="Gene3D" id="3.40.50.300">
    <property type="entry name" value="P-loop containing nucleotide triphosphate hydrolases"/>
    <property type="match status" value="1"/>
</dbReference>
<dbReference type="InterPro" id="IPR012824">
    <property type="entry name" value="CobW"/>
</dbReference>
<dbReference type="InterPro" id="IPR036627">
    <property type="entry name" value="CobW-likC_sf"/>
</dbReference>
<dbReference type="InterPro" id="IPR011629">
    <property type="entry name" value="CobW-like_C"/>
</dbReference>
<dbReference type="InterPro" id="IPR003495">
    <property type="entry name" value="CobW/HypB/UreG_nucleotide-bd"/>
</dbReference>
<dbReference type="InterPro" id="IPR027417">
    <property type="entry name" value="P-loop_NTPase"/>
</dbReference>
<dbReference type="InterPro" id="IPR051316">
    <property type="entry name" value="Zinc-reg_GTPase_activator"/>
</dbReference>
<dbReference type="NCBIfam" id="TIGR02475">
    <property type="entry name" value="CobW"/>
    <property type="match status" value="1"/>
</dbReference>
<dbReference type="PANTHER" id="PTHR13748:SF62">
    <property type="entry name" value="COBW DOMAIN-CONTAINING PROTEIN"/>
    <property type="match status" value="1"/>
</dbReference>
<dbReference type="PANTHER" id="PTHR13748">
    <property type="entry name" value="COBW-RELATED"/>
    <property type="match status" value="1"/>
</dbReference>
<dbReference type="Pfam" id="PF02492">
    <property type="entry name" value="cobW"/>
    <property type="match status" value="1"/>
</dbReference>
<dbReference type="Pfam" id="PF07683">
    <property type="entry name" value="CobW_C"/>
    <property type="match status" value="1"/>
</dbReference>
<dbReference type="SMART" id="SM00833">
    <property type="entry name" value="CobW_C"/>
    <property type="match status" value="1"/>
</dbReference>
<dbReference type="SUPFAM" id="SSF90002">
    <property type="entry name" value="Hypothetical protein YjiA, C-terminal domain"/>
    <property type="match status" value="1"/>
</dbReference>
<dbReference type="SUPFAM" id="SSF52540">
    <property type="entry name" value="P-loop containing nucleoside triphosphate hydrolases"/>
    <property type="match status" value="1"/>
</dbReference>
<comment type="function">
    <text evidence="2">Zinc chaperone that directly transfers zinc cofactor to target proteins, thereby activating them (By similarity). Zinc is transferred from the CXCC motif in the GTPase domain to the zinc binding site in target proteins in a process requiring GTP hydrolysis (By similarity).</text>
</comment>
<comment type="catalytic activity">
    <reaction evidence="1">
        <text>GTP + H2O = GDP + phosphate + H(+)</text>
        <dbReference type="Rhea" id="RHEA:19669"/>
        <dbReference type="ChEBI" id="CHEBI:15377"/>
        <dbReference type="ChEBI" id="CHEBI:15378"/>
        <dbReference type="ChEBI" id="CHEBI:37565"/>
        <dbReference type="ChEBI" id="CHEBI:43474"/>
        <dbReference type="ChEBI" id="CHEBI:58189"/>
    </reaction>
    <physiologicalReaction direction="left-to-right" evidence="1">
        <dbReference type="Rhea" id="RHEA:19670"/>
    </physiologicalReaction>
</comment>
<comment type="pathway">
    <text>Cofactor biosynthesis; adenosylcobalamin biosynthesis.</text>
</comment>
<comment type="similarity">
    <text evidence="5">Belongs to the SIMIBI class G3E GTPase family. ZNG1 subfamily.</text>
</comment>